<organism>
    <name type="scientific">Aliivibrio fischeri (strain MJ11)</name>
    <name type="common">Vibrio fischeri</name>
    <dbReference type="NCBI Taxonomy" id="388396"/>
    <lineage>
        <taxon>Bacteria</taxon>
        <taxon>Pseudomonadati</taxon>
        <taxon>Pseudomonadota</taxon>
        <taxon>Gammaproteobacteria</taxon>
        <taxon>Vibrionales</taxon>
        <taxon>Vibrionaceae</taxon>
        <taxon>Aliivibrio</taxon>
    </lineage>
</organism>
<sequence length="342" mass="37808">MTTLTITRPDDWHLHLRDGDVLTDTVRDSGRYNGRALIMPNLVPPVTTTEQALSYRERIQAENKSDSFAPLMSLYLTEKTTSEEIRKAKATGHIVAAKLYPAGATTNSDSGVSDIKKVYPILKTMQEEGMLLLIHGEVTTHDVDIFDREKTFLDTVLAPIVNDFPELKIVLEHITTKDAADFVKNAGPNVAATITAHHLLFNRNHMLVGGIKPHFYCLPILKRNTHQQALVEAATSGNPKFFLGTDSAPHAKDKKEAACGCAGSYTAHASIELYAEVFENEGKLENLEAFASFNGPDFYNLPRNTDTITLVKEAWIAPETMAFGNDFVVPIRAGEAVEWLVK</sequence>
<gene>
    <name evidence="1" type="primary">pyrC</name>
    <name type="ordered locus">VFMJ11_A0452</name>
</gene>
<reference key="1">
    <citation type="submission" date="2008-08" db="EMBL/GenBank/DDBJ databases">
        <title>Complete sequence of Vibrio fischeri strain MJ11.</title>
        <authorList>
            <person name="Mandel M.J."/>
            <person name="Stabb E.V."/>
            <person name="Ruby E.G."/>
            <person name="Ferriera S."/>
            <person name="Johnson J."/>
            <person name="Kravitz S."/>
            <person name="Beeson K."/>
            <person name="Sutton G."/>
            <person name="Rogers Y.-H."/>
            <person name="Friedman R."/>
            <person name="Frazier M."/>
            <person name="Venter J.C."/>
        </authorList>
    </citation>
    <scope>NUCLEOTIDE SEQUENCE [LARGE SCALE GENOMIC DNA]</scope>
    <source>
        <strain>MJ11</strain>
    </source>
</reference>
<proteinExistence type="inferred from homology"/>
<protein>
    <recommendedName>
        <fullName evidence="1">Dihydroorotase</fullName>
        <shortName evidence="1">DHOase</shortName>
        <ecNumber evidence="1">3.5.2.3</ecNumber>
    </recommendedName>
</protein>
<accession>B5ETI9</accession>
<keyword id="KW-0378">Hydrolase</keyword>
<keyword id="KW-0479">Metal-binding</keyword>
<keyword id="KW-0665">Pyrimidine biosynthesis</keyword>
<keyword id="KW-0862">Zinc</keyword>
<feature type="chain" id="PRO_1000100066" description="Dihydroorotase">
    <location>
        <begin position="1"/>
        <end position="342"/>
    </location>
</feature>
<feature type="active site" evidence="1">
    <location>
        <position position="246"/>
    </location>
</feature>
<feature type="binding site" evidence="1">
    <location>
        <position position="13"/>
    </location>
    <ligand>
        <name>Zn(2+)</name>
        <dbReference type="ChEBI" id="CHEBI:29105"/>
        <label>1</label>
    </ligand>
</feature>
<feature type="binding site" evidence="1">
    <location>
        <begin position="15"/>
        <end position="17"/>
    </location>
    <ligand>
        <name>substrate</name>
    </ligand>
</feature>
<feature type="binding site" evidence="1">
    <location>
        <position position="15"/>
    </location>
    <ligand>
        <name>Zn(2+)</name>
        <dbReference type="ChEBI" id="CHEBI:29105"/>
        <label>1</label>
    </ligand>
</feature>
<feature type="binding site" evidence="1">
    <location>
        <position position="41"/>
    </location>
    <ligand>
        <name>substrate</name>
    </ligand>
</feature>
<feature type="binding site" description="via carbamate group" evidence="1">
    <location>
        <position position="98"/>
    </location>
    <ligand>
        <name>Zn(2+)</name>
        <dbReference type="ChEBI" id="CHEBI:29105"/>
        <label>1</label>
    </ligand>
</feature>
<feature type="binding site" description="via carbamate group" evidence="1">
    <location>
        <position position="98"/>
    </location>
    <ligand>
        <name>Zn(2+)</name>
        <dbReference type="ChEBI" id="CHEBI:29105"/>
        <label>2</label>
    </ligand>
</feature>
<feature type="binding site" evidence="1">
    <location>
        <position position="135"/>
    </location>
    <ligand>
        <name>substrate</name>
    </ligand>
</feature>
<feature type="binding site" evidence="1">
    <location>
        <position position="135"/>
    </location>
    <ligand>
        <name>Zn(2+)</name>
        <dbReference type="ChEBI" id="CHEBI:29105"/>
        <label>2</label>
    </ligand>
</feature>
<feature type="binding site" evidence="1">
    <location>
        <position position="173"/>
    </location>
    <ligand>
        <name>Zn(2+)</name>
        <dbReference type="ChEBI" id="CHEBI:29105"/>
        <label>2</label>
    </ligand>
</feature>
<feature type="binding site" evidence="1">
    <location>
        <position position="218"/>
    </location>
    <ligand>
        <name>substrate</name>
    </ligand>
</feature>
<feature type="binding site" evidence="1">
    <location>
        <position position="246"/>
    </location>
    <ligand>
        <name>Zn(2+)</name>
        <dbReference type="ChEBI" id="CHEBI:29105"/>
        <label>1</label>
    </ligand>
</feature>
<feature type="binding site" evidence="1">
    <location>
        <position position="250"/>
    </location>
    <ligand>
        <name>substrate</name>
    </ligand>
</feature>
<feature type="binding site" evidence="1">
    <location>
        <position position="262"/>
    </location>
    <ligand>
        <name>substrate</name>
    </ligand>
</feature>
<feature type="modified residue" description="N6-carboxylysine" evidence="1">
    <location>
        <position position="98"/>
    </location>
</feature>
<name>PYRC_ALIFM</name>
<dbReference type="EC" id="3.5.2.3" evidence="1"/>
<dbReference type="EMBL" id="CP001133">
    <property type="protein sequence ID" value="ACH64205.1"/>
    <property type="molecule type" value="Genomic_DNA"/>
</dbReference>
<dbReference type="RefSeq" id="WP_012535325.1">
    <property type="nucleotide sequence ID" value="NC_011186.1"/>
</dbReference>
<dbReference type="SMR" id="B5ETI9"/>
<dbReference type="MEROPS" id="M38.A02"/>
<dbReference type="KEGG" id="vfm:VFMJ11_A0452"/>
<dbReference type="HOGENOM" id="CLU_041558_1_0_6"/>
<dbReference type="UniPathway" id="UPA00070">
    <property type="reaction ID" value="UER00117"/>
</dbReference>
<dbReference type="Proteomes" id="UP000001857">
    <property type="component" value="Chromosome II"/>
</dbReference>
<dbReference type="GO" id="GO:0005829">
    <property type="term" value="C:cytosol"/>
    <property type="evidence" value="ECO:0007669"/>
    <property type="project" value="TreeGrafter"/>
</dbReference>
<dbReference type="GO" id="GO:0004151">
    <property type="term" value="F:dihydroorotase activity"/>
    <property type="evidence" value="ECO:0007669"/>
    <property type="project" value="UniProtKB-UniRule"/>
</dbReference>
<dbReference type="GO" id="GO:0008270">
    <property type="term" value="F:zinc ion binding"/>
    <property type="evidence" value="ECO:0007669"/>
    <property type="project" value="UniProtKB-UniRule"/>
</dbReference>
<dbReference type="GO" id="GO:0006207">
    <property type="term" value="P:'de novo' pyrimidine nucleobase biosynthetic process"/>
    <property type="evidence" value="ECO:0007669"/>
    <property type="project" value="TreeGrafter"/>
</dbReference>
<dbReference type="GO" id="GO:0044205">
    <property type="term" value="P:'de novo' UMP biosynthetic process"/>
    <property type="evidence" value="ECO:0007669"/>
    <property type="project" value="UniProtKB-UniRule"/>
</dbReference>
<dbReference type="CDD" id="cd01294">
    <property type="entry name" value="DHOase"/>
    <property type="match status" value="1"/>
</dbReference>
<dbReference type="FunFam" id="3.20.20.140:FF:000006">
    <property type="entry name" value="Dihydroorotase"/>
    <property type="match status" value="1"/>
</dbReference>
<dbReference type="Gene3D" id="3.20.20.140">
    <property type="entry name" value="Metal-dependent hydrolases"/>
    <property type="match status" value="1"/>
</dbReference>
<dbReference type="HAMAP" id="MF_00219">
    <property type="entry name" value="PyrC_classII"/>
    <property type="match status" value="1"/>
</dbReference>
<dbReference type="InterPro" id="IPR006680">
    <property type="entry name" value="Amidohydro-rel"/>
</dbReference>
<dbReference type="InterPro" id="IPR004721">
    <property type="entry name" value="DHOdimr"/>
</dbReference>
<dbReference type="InterPro" id="IPR002195">
    <property type="entry name" value="Dihydroorotase_CS"/>
</dbReference>
<dbReference type="InterPro" id="IPR032466">
    <property type="entry name" value="Metal_Hydrolase"/>
</dbReference>
<dbReference type="NCBIfam" id="TIGR00856">
    <property type="entry name" value="pyrC_dimer"/>
    <property type="match status" value="1"/>
</dbReference>
<dbReference type="PANTHER" id="PTHR43137">
    <property type="entry name" value="DIHYDROOROTASE"/>
    <property type="match status" value="1"/>
</dbReference>
<dbReference type="PANTHER" id="PTHR43137:SF1">
    <property type="entry name" value="DIHYDROOROTASE"/>
    <property type="match status" value="1"/>
</dbReference>
<dbReference type="Pfam" id="PF01979">
    <property type="entry name" value="Amidohydro_1"/>
    <property type="match status" value="1"/>
</dbReference>
<dbReference type="PIRSF" id="PIRSF001237">
    <property type="entry name" value="DHOdimr"/>
    <property type="match status" value="1"/>
</dbReference>
<dbReference type="SUPFAM" id="SSF51556">
    <property type="entry name" value="Metallo-dependent hydrolases"/>
    <property type="match status" value="1"/>
</dbReference>
<dbReference type="PROSITE" id="PS00482">
    <property type="entry name" value="DIHYDROOROTASE_1"/>
    <property type="match status" value="1"/>
</dbReference>
<dbReference type="PROSITE" id="PS00483">
    <property type="entry name" value="DIHYDROOROTASE_2"/>
    <property type="match status" value="1"/>
</dbReference>
<comment type="function">
    <text evidence="1">Catalyzes the reversible cyclization of carbamoyl aspartate to dihydroorotate.</text>
</comment>
<comment type="catalytic activity">
    <reaction evidence="1">
        <text>(S)-dihydroorotate + H2O = N-carbamoyl-L-aspartate + H(+)</text>
        <dbReference type="Rhea" id="RHEA:24296"/>
        <dbReference type="ChEBI" id="CHEBI:15377"/>
        <dbReference type="ChEBI" id="CHEBI:15378"/>
        <dbReference type="ChEBI" id="CHEBI:30864"/>
        <dbReference type="ChEBI" id="CHEBI:32814"/>
        <dbReference type="EC" id="3.5.2.3"/>
    </reaction>
</comment>
<comment type="cofactor">
    <cofactor evidence="1">
        <name>Zn(2+)</name>
        <dbReference type="ChEBI" id="CHEBI:29105"/>
    </cofactor>
    <text evidence="1">Binds 2 Zn(2+) ions per subunit.</text>
</comment>
<comment type="pathway">
    <text evidence="1">Pyrimidine metabolism; UMP biosynthesis via de novo pathway; (S)-dihydroorotate from bicarbonate: step 3/3.</text>
</comment>
<comment type="subunit">
    <text evidence="1">Homodimer.</text>
</comment>
<comment type="similarity">
    <text evidence="1">Belongs to the metallo-dependent hydrolases superfamily. DHOase family. Class II DHOase subfamily.</text>
</comment>
<evidence type="ECO:0000255" key="1">
    <source>
        <dbReference type="HAMAP-Rule" id="MF_00219"/>
    </source>
</evidence>